<accession>B0TQ91</accession>
<sequence length="257" mass="27082">MSDLKKAAQQAISLMDLTTLNDDDTDQKVIELCHKAKTPAGDTAAICIYPRFIPIARKTLNEIGGDDIKIATVTNFPHGNDDIAIAVLETRAAVAYGADEVDVVFPYRALMEGNETVGFELVKACKEACGEDTILKVIIESGVLADPALIRKASELSIDAGADFIKTSTGKVAVNATLEAAEIMMTVISEKNPKVGFKPAGGVKDAAAAAEFLGVAARLLGDDWATPATFRFGASSLLTNLLHTLELADAPQGAQGY</sequence>
<keyword id="KW-0002">3D-structure</keyword>
<keyword id="KW-0963">Cytoplasm</keyword>
<keyword id="KW-0456">Lyase</keyword>
<keyword id="KW-0704">Schiff base</keyword>
<protein>
    <recommendedName>
        <fullName evidence="1">Deoxyribose-phosphate aldolase</fullName>
        <shortName evidence="1">DERA</shortName>
        <ecNumber evidence="1">4.1.2.4</ecNumber>
    </recommendedName>
    <alternativeName>
        <fullName evidence="1">2-deoxy-D-ribose 5-phosphate aldolase</fullName>
    </alternativeName>
    <alternativeName>
        <fullName evidence="1">Phosphodeoxyriboaldolase</fullName>
        <shortName evidence="1">Deoxyriboaldolase</shortName>
    </alternativeName>
</protein>
<evidence type="ECO:0000255" key="1">
    <source>
        <dbReference type="HAMAP-Rule" id="MF_00592"/>
    </source>
</evidence>
<evidence type="ECO:0007829" key="2">
    <source>
        <dbReference type="PDB" id="5C6M"/>
    </source>
</evidence>
<organism>
    <name type="scientific">Shewanella halifaxensis (strain HAW-EB4)</name>
    <dbReference type="NCBI Taxonomy" id="458817"/>
    <lineage>
        <taxon>Bacteria</taxon>
        <taxon>Pseudomonadati</taxon>
        <taxon>Pseudomonadota</taxon>
        <taxon>Gammaproteobacteria</taxon>
        <taxon>Alteromonadales</taxon>
        <taxon>Shewanellaceae</taxon>
        <taxon>Shewanella</taxon>
    </lineage>
</organism>
<feature type="chain" id="PRO_1000082419" description="Deoxyribose-phosphate aldolase">
    <location>
        <begin position="1"/>
        <end position="257"/>
    </location>
</feature>
<feature type="active site" description="Proton donor/acceptor" evidence="1">
    <location>
        <position position="102"/>
    </location>
</feature>
<feature type="active site" description="Schiff-base intermediate with acetaldehyde" evidence="1">
    <location>
        <position position="166"/>
    </location>
</feature>
<feature type="active site" description="Proton donor/acceptor" evidence="1">
    <location>
        <position position="198"/>
    </location>
</feature>
<feature type="helix" evidence="2">
    <location>
        <begin position="2"/>
        <end position="13"/>
    </location>
</feature>
<feature type="strand" evidence="2">
    <location>
        <begin position="15"/>
        <end position="18"/>
    </location>
</feature>
<feature type="helix" evidence="2">
    <location>
        <begin position="26"/>
        <end position="36"/>
    </location>
</feature>
<feature type="strand" evidence="2">
    <location>
        <begin position="44"/>
        <end position="47"/>
    </location>
</feature>
<feature type="helix" evidence="2">
    <location>
        <begin position="50"/>
        <end position="52"/>
    </location>
</feature>
<feature type="helix" evidence="2">
    <location>
        <begin position="53"/>
        <end position="62"/>
    </location>
</feature>
<feature type="strand" evidence="2">
    <location>
        <begin position="68"/>
        <end position="75"/>
    </location>
</feature>
<feature type="turn" evidence="2">
    <location>
        <begin position="76"/>
        <end position="78"/>
    </location>
</feature>
<feature type="helix" evidence="2">
    <location>
        <begin position="83"/>
        <end position="96"/>
    </location>
</feature>
<feature type="strand" evidence="2">
    <location>
        <begin position="99"/>
        <end position="104"/>
    </location>
</feature>
<feature type="helix" evidence="2">
    <location>
        <begin position="107"/>
        <end position="111"/>
    </location>
</feature>
<feature type="helix" evidence="2">
    <location>
        <begin position="116"/>
        <end position="129"/>
    </location>
</feature>
<feature type="turn" evidence="2">
    <location>
        <begin position="130"/>
        <end position="132"/>
    </location>
</feature>
<feature type="strand" evidence="2">
    <location>
        <begin position="134"/>
        <end position="138"/>
    </location>
</feature>
<feature type="helix" evidence="2">
    <location>
        <begin position="141"/>
        <end position="144"/>
    </location>
</feature>
<feature type="helix" evidence="2">
    <location>
        <begin position="147"/>
        <end position="159"/>
    </location>
</feature>
<feature type="strand" evidence="2">
    <location>
        <begin position="163"/>
        <end position="166"/>
    </location>
</feature>
<feature type="strand" evidence="2">
    <location>
        <begin position="170"/>
        <end position="173"/>
    </location>
</feature>
<feature type="helix" evidence="2">
    <location>
        <begin position="178"/>
        <end position="191"/>
    </location>
</feature>
<feature type="strand" evidence="2">
    <location>
        <begin position="195"/>
        <end position="198"/>
    </location>
</feature>
<feature type="helix" evidence="2">
    <location>
        <begin position="206"/>
        <end position="220"/>
    </location>
</feature>
<feature type="turn" evidence="2">
    <location>
        <begin position="227"/>
        <end position="229"/>
    </location>
</feature>
<feature type="strand" evidence="2">
    <location>
        <begin position="232"/>
        <end position="237"/>
    </location>
</feature>
<feature type="helix" evidence="2">
    <location>
        <begin position="238"/>
        <end position="244"/>
    </location>
</feature>
<proteinExistence type="evidence at protein level"/>
<name>DEOC_SHEHH</name>
<gene>
    <name evidence="1" type="primary">deoC</name>
    <name type="ordered locus">Shal_3136</name>
</gene>
<reference key="1">
    <citation type="submission" date="2008-01" db="EMBL/GenBank/DDBJ databases">
        <title>Complete sequence of Shewanella halifaxensis HAW-EB4.</title>
        <authorList>
            <consortium name="US DOE Joint Genome Institute"/>
            <person name="Copeland A."/>
            <person name="Lucas S."/>
            <person name="Lapidus A."/>
            <person name="Glavina del Rio T."/>
            <person name="Dalin E."/>
            <person name="Tice H."/>
            <person name="Bruce D."/>
            <person name="Goodwin L."/>
            <person name="Pitluck S."/>
            <person name="Sims D."/>
            <person name="Brettin T."/>
            <person name="Detter J.C."/>
            <person name="Han C."/>
            <person name="Kuske C.R."/>
            <person name="Schmutz J."/>
            <person name="Larimer F."/>
            <person name="Land M."/>
            <person name="Hauser L."/>
            <person name="Kyrpides N."/>
            <person name="Kim E."/>
            <person name="Zhao J.-S."/>
            <person name="Richardson P."/>
        </authorList>
    </citation>
    <scope>NUCLEOTIDE SEQUENCE [LARGE SCALE GENOMIC DNA]</scope>
    <source>
        <strain>HAW-EB4</strain>
    </source>
</reference>
<comment type="function">
    <text evidence="1">Catalyzes a reversible aldol reaction between acetaldehyde and D-glyceraldehyde 3-phosphate to generate 2-deoxy-D-ribose 5-phosphate.</text>
</comment>
<comment type="catalytic activity">
    <reaction evidence="1">
        <text>2-deoxy-D-ribose 5-phosphate = D-glyceraldehyde 3-phosphate + acetaldehyde</text>
        <dbReference type="Rhea" id="RHEA:12821"/>
        <dbReference type="ChEBI" id="CHEBI:15343"/>
        <dbReference type="ChEBI" id="CHEBI:59776"/>
        <dbReference type="ChEBI" id="CHEBI:62877"/>
        <dbReference type="EC" id="4.1.2.4"/>
    </reaction>
</comment>
<comment type="pathway">
    <text evidence="1">Carbohydrate degradation; 2-deoxy-D-ribose 1-phosphate degradation; D-glyceraldehyde 3-phosphate and acetaldehyde from 2-deoxy-alpha-D-ribose 1-phosphate: step 2/2.</text>
</comment>
<comment type="subcellular location">
    <subcellularLocation>
        <location evidence="1">Cytoplasm</location>
    </subcellularLocation>
</comment>
<comment type="similarity">
    <text evidence="1">Belongs to the DeoC/FbaB aldolase family. DeoC type 2 subfamily.</text>
</comment>
<dbReference type="EC" id="4.1.2.4" evidence="1"/>
<dbReference type="EMBL" id="CP000931">
    <property type="protein sequence ID" value="ABZ77683.1"/>
    <property type="molecule type" value="Genomic_DNA"/>
</dbReference>
<dbReference type="RefSeq" id="WP_012278208.1">
    <property type="nucleotide sequence ID" value="NC_010334.1"/>
</dbReference>
<dbReference type="PDB" id="5C6M">
    <property type="method" value="X-ray"/>
    <property type="resolution" value="1.76 A"/>
    <property type="chains" value="A/B/C/D=1-257"/>
</dbReference>
<dbReference type="PDBsum" id="5C6M"/>
<dbReference type="SMR" id="B0TQ91"/>
<dbReference type="STRING" id="458817.Shal_3136"/>
<dbReference type="KEGG" id="shl:Shal_3136"/>
<dbReference type="eggNOG" id="COG0274">
    <property type="taxonomic scope" value="Bacteria"/>
</dbReference>
<dbReference type="HOGENOM" id="CLU_053595_3_1_6"/>
<dbReference type="OrthoDB" id="6579831at2"/>
<dbReference type="UniPathway" id="UPA00002">
    <property type="reaction ID" value="UER00468"/>
</dbReference>
<dbReference type="Proteomes" id="UP000001317">
    <property type="component" value="Chromosome"/>
</dbReference>
<dbReference type="GO" id="GO:0005737">
    <property type="term" value="C:cytoplasm"/>
    <property type="evidence" value="ECO:0007669"/>
    <property type="project" value="UniProtKB-SubCell"/>
</dbReference>
<dbReference type="GO" id="GO:0004139">
    <property type="term" value="F:deoxyribose-phosphate aldolase activity"/>
    <property type="evidence" value="ECO:0007669"/>
    <property type="project" value="UniProtKB-UniRule"/>
</dbReference>
<dbReference type="GO" id="GO:0006018">
    <property type="term" value="P:2-deoxyribose 1-phosphate catabolic process"/>
    <property type="evidence" value="ECO:0007669"/>
    <property type="project" value="UniProtKB-UniRule"/>
</dbReference>
<dbReference type="GO" id="GO:0016052">
    <property type="term" value="P:carbohydrate catabolic process"/>
    <property type="evidence" value="ECO:0007669"/>
    <property type="project" value="TreeGrafter"/>
</dbReference>
<dbReference type="GO" id="GO:0009264">
    <property type="term" value="P:deoxyribonucleotide catabolic process"/>
    <property type="evidence" value="ECO:0007669"/>
    <property type="project" value="InterPro"/>
</dbReference>
<dbReference type="CDD" id="cd00959">
    <property type="entry name" value="DeoC"/>
    <property type="match status" value="1"/>
</dbReference>
<dbReference type="Gene3D" id="3.20.20.70">
    <property type="entry name" value="Aldolase class I"/>
    <property type="match status" value="1"/>
</dbReference>
<dbReference type="HAMAP" id="MF_00592">
    <property type="entry name" value="DeoC_type2"/>
    <property type="match status" value="1"/>
</dbReference>
<dbReference type="InterPro" id="IPR013785">
    <property type="entry name" value="Aldolase_TIM"/>
</dbReference>
<dbReference type="InterPro" id="IPR011343">
    <property type="entry name" value="DeoC"/>
</dbReference>
<dbReference type="InterPro" id="IPR002915">
    <property type="entry name" value="DeoC/FbaB/LacD_aldolase"/>
</dbReference>
<dbReference type="InterPro" id="IPR023649">
    <property type="entry name" value="DeoC_typeII"/>
</dbReference>
<dbReference type="NCBIfam" id="TIGR00126">
    <property type="entry name" value="deoC"/>
    <property type="match status" value="1"/>
</dbReference>
<dbReference type="PANTHER" id="PTHR10889">
    <property type="entry name" value="DEOXYRIBOSE-PHOSPHATE ALDOLASE"/>
    <property type="match status" value="1"/>
</dbReference>
<dbReference type="PANTHER" id="PTHR10889:SF3">
    <property type="entry name" value="DEOXYRIBOSE-PHOSPHATE ALDOLASE"/>
    <property type="match status" value="1"/>
</dbReference>
<dbReference type="Pfam" id="PF01791">
    <property type="entry name" value="DeoC"/>
    <property type="match status" value="1"/>
</dbReference>
<dbReference type="PIRSF" id="PIRSF001357">
    <property type="entry name" value="DeoC"/>
    <property type="match status" value="1"/>
</dbReference>
<dbReference type="SMART" id="SM01133">
    <property type="entry name" value="DeoC"/>
    <property type="match status" value="1"/>
</dbReference>
<dbReference type="SUPFAM" id="SSF51569">
    <property type="entry name" value="Aldolase"/>
    <property type="match status" value="1"/>
</dbReference>